<proteinExistence type="inferred from homology"/>
<evidence type="ECO:0000255" key="1">
    <source>
        <dbReference type="HAMAP-Rule" id="MF_01632"/>
    </source>
</evidence>
<sequence>MITFPVSLSADWQCASLFSDLSSAEQEWLFEPHSLTAKLKSRSQCFSVKVLSEQEFELSAEQQQLLGCTQTTALNREVLLLCDNKPVVYAQSWLPASVNAANNKLHNMGERPLGDVIFQDPQLTRTDIEIARFNTQHSLQQLVAQLKLPSQSLLGRRSLFSLKDYKFLVCEVFLPGAYLY</sequence>
<comment type="function">
    <text evidence="1">Removes the pyruvyl group from chorismate, with concomitant aromatization of the ring, to provide 4-hydroxybenzoate (4HB) for the ubiquinone pathway.</text>
</comment>
<comment type="catalytic activity">
    <reaction evidence="1">
        <text>chorismate = 4-hydroxybenzoate + pyruvate</text>
        <dbReference type="Rhea" id="RHEA:16505"/>
        <dbReference type="ChEBI" id="CHEBI:15361"/>
        <dbReference type="ChEBI" id="CHEBI:17879"/>
        <dbReference type="ChEBI" id="CHEBI:29748"/>
        <dbReference type="EC" id="4.1.3.40"/>
    </reaction>
</comment>
<comment type="pathway">
    <text evidence="1">Cofactor biosynthesis; ubiquinone biosynthesis.</text>
</comment>
<comment type="subcellular location">
    <subcellularLocation>
        <location evidence="1">Cytoplasm</location>
    </subcellularLocation>
</comment>
<comment type="similarity">
    <text evidence="1">Belongs to the UbiC family.</text>
</comment>
<gene>
    <name evidence="1" type="primary">ubiC</name>
    <name type="ordered locus">PSHAa2311</name>
</gene>
<reference key="1">
    <citation type="journal article" date="2005" name="Genome Res.">
        <title>Coping with cold: the genome of the versatile marine Antarctica bacterium Pseudoalteromonas haloplanktis TAC125.</title>
        <authorList>
            <person name="Medigue C."/>
            <person name="Krin E."/>
            <person name="Pascal G."/>
            <person name="Barbe V."/>
            <person name="Bernsel A."/>
            <person name="Bertin P.N."/>
            <person name="Cheung F."/>
            <person name="Cruveiller S."/>
            <person name="D'Amico S."/>
            <person name="Duilio A."/>
            <person name="Fang G."/>
            <person name="Feller G."/>
            <person name="Ho C."/>
            <person name="Mangenot S."/>
            <person name="Marino G."/>
            <person name="Nilsson J."/>
            <person name="Parrilli E."/>
            <person name="Rocha E.P.C."/>
            <person name="Rouy Z."/>
            <person name="Sekowska A."/>
            <person name="Tutino M.L."/>
            <person name="Vallenet D."/>
            <person name="von Heijne G."/>
            <person name="Danchin A."/>
        </authorList>
    </citation>
    <scope>NUCLEOTIDE SEQUENCE [LARGE SCALE GENOMIC DNA]</scope>
    <source>
        <strain>TAC 125</strain>
    </source>
</reference>
<keyword id="KW-0963">Cytoplasm</keyword>
<keyword id="KW-0456">Lyase</keyword>
<keyword id="KW-0670">Pyruvate</keyword>
<keyword id="KW-1185">Reference proteome</keyword>
<keyword id="KW-0831">Ubiquinone biosynthesis</keyword>
<protein>
    <recommendedName>
        <fullName evidence="1">Probable chorismate pyruvate-lyase</fullName>
        <shortName evidence="1">CL</shortName>
        <shortName evidence="1">CPL</shortName>
        <ecNumber evidence="1">4.1.3.40</ecNumber>
    </recommendedName>
</protein>
<name>UBIC_PSET1</name>
<dbReference type="EC" id="4.1.3.40" evidence="1"/>
<dbReference type="EMBL" id="CR954246">
    <property type="protein sequence ID" value="CAI87367.1"/>
    <property type="molecule type" value="Genomic_DNA"/>
</dbReference>
<dbReference type="SMR" id="Q3IHW4"/>
<dbReference type="STRING" id="326442.PSHAa2311"/>
<dbReference type="KEGG" id="pha:PSHAa2311"/>
<dbReference type="eggNOG" id="COG3161">
    <property type="taxonomic scope" value="Bacteria"/>
</dbReference>
<dbReference type="HOGENOM" id="CLU_096824_2_0_6"/>
<dbReference type="UniPathway" id="UPA00232"/>
<dbReference type="Proteomes" id="UP000006843">
    <property type="component" value="Chromosome I"/>
</dbReference>
<dbReference type="GO" id="GO:0005829">
    <property type="term" value="C:cytosol"/>
    <property type="evidence" value="ECO:0007669"/>
    <property type="project" value="TreeGrafter"/>
</dbReference>
<dbReference type="GO" id="GO:0008813">
    <property type="term" value="F:chorismate lyase activity"/>
    <property type="evidence" value="ECO:0007669"/>
    <property type="project" value="UniProtKB-UniRule"/>
</dbReference>
<dbReference type="GO" id="GO:0042866">
    <property type="term" value="P:pyruvate biosynthetic process"/>
    <property type="evidence" value="ECO:0007669"/>
    <property type="project" value="UniProtKB-UniRule"/>
</dbReference>
<dbReference type="GO" id="GO:0006744">
    <property type="term" value="P:ubiquinone biosynthetic process"/>
    <property type="evidence" value="ECO:0007669"/>
    <property type="project" value="UniProtKB-UniRule"/>
</dbReference>
<dbReference type="Gene3D" id="3.40.1410.10">
    <property type="entry name" value="Chorismate lyase-like"/>
    <property type="match status" value="1"/>
</dbReference>
<dbReference type="HAMAP" id="MF_01632">
    <property type="entry name" value="UbiC"/>
    <property type="match status" value="1"/>
</dbReference>
<dbReference type="InterPro" id="IPR007440">
    <property type="entry name" value="Chorismate--pyruvate_lyase"/>
</dbReference>
<dbReference type="InterPro" id="IPR028978">
    <property type="entry name" value="Chorismate_lyase_/UTRA_dom_sf"/>
</dbReference>
<dbReference type="PANTHER" id="PTHR38683">
    <property type="entry name" value="CHORISMATE PYRUVATE-LYASE"/>
    <property type="match status" value="1"/>
</dbReference>
<dbReference type="PANTHER" id="PTHR38683:SF1">
    <property type="entry name" value="CHORISMATE PYRUVATE-LYASE"/>
    <property type="match status" value="1"/>
</dbReference>
<dbReference type="Pfam" id="PF04345">
    <property type="entry name" value="Chor_lyase"/>
    <property type="match status" value="1"/>
</dbReference>
<dbReference type="SUPFAM" id="SSF64288">
    <property type="entry name" value="Chorismate lyase-like"/>
    <property type="match status" value="1"/>
</dbReference>
<accession>Q3IHW4</accession>
<organism>
    <name type="scientific">Pseudoalteromonas translucida (strain TAC 125)</name>
    <dbReference type="NCBI Taxonomy" id="326442"/>
    <lineage>
        <taxon>Bacteria</taxon>
        <taxon>Pseudomonadati</taxon>
        <taxon>Pseudomonadota</taxon>
        <taxon>Gammaproteobacteria</taxon>
        <taxon>Alteromonadales</taxon>
        <taxon>Pseudoalteromonadaceae</taxon>
        <taxon>Pseudoalteromonas</taxon>
    </lineage>
</organism>
<feature type="chain" id="PRO_0000240554" description="Probable chorismate pyruvate-lyase">
    <location>
        <begin position="1"/>
        <end position="180"/>
    </location>
</feature>
<feature type="binding site" evidence="1">
    <location>
        <position position="76"/>
    </location>
    <ligand>
        <name>substrate</name>
    </ligand>
</feature>
<feature type="binding site" evidence="1">
    <location>
        <position position="113"/>
    </location>
    <ligand>
        <name>substrate</name>
    </ligand>
</feature>
<feature type="binding site" evidence="1">
    <location>
        <position position="171"/>
    </location>
    <ligand>
        <name>substrate</name>
    </ligand>
</feature>